<comment type="function">
    <text evidence="1 2">Integral membrane protein associated with integrins, which regulates different processes, such as sperm-egg fusion, platelet activation and aggregation, and cell adhesion (By similarity). Present at the cell surface of oocytes and plays a key role in sperm-egg fusion, possibly by organizing multiprotein complexes and the morphology of the membrane required for the fusion (By similarity). In myoblasts, associates with CD81 and PTGFRN and inhibits myotube fusion during muscle regeneration (By similarity). In macrophages, associates with CD81 and beta-1 and beta-2 integrins, and prevents macrophage fusion into multinucleated giant cells specialized in ingesting complement-opsonized large particles (By similarity). Also prevents the fusion between mononuclear cell progenitors into osteoclasts in charge of bone resorption (By similarity). Acts as a receptor for PSG17 (By similarity). Involved in platelet activation and aggregation (By similarity). Regulates paranodal junction formation (By similarity). Involved in cell adhesion, cell motility and tumor metastasis (By similarity).</text>
</comment>
<comment type="subunit">
    <text evidence="1 2">Forms both disulfide-linked homodimers and higher homooligomers as well as heterooligomers with other members of the tetraspanin family. Interacts (via the second extracellular domain) with integrin ITGAV:ITGB3 (By similarity). Interacts with integrin ITGA6:ITGB1; interaction takes place in oocytes and is involved in sperm-egg fusion (By similarity). Part of integrin-tetraspanin complexes composed of CD81, beta-1 and beta-2 integrins in the membrane of monocyte/macrophages (By similarity). Interacts with CD63; identified in a complex with CD63 and ITGB3. Associates with CR2/CD21 and with PTGFRN/CD9P1. Part of a complex composed of CD9, CD81, PTGFRN and IGSF8 (By similarity). Interacts directly with IGSF8. Interacts with PDPN; this interaction is homophilic and attenuates platelet aggregation and pulmonary metastasis induced by PDPN. Interacts (on T cell side) with CD81 at immunological synapses between antigen-presenting cells and T cells (By similarity).</text>
</comment>
<comment type="subcellular location">
    <subcellularLocation>
        <location evidence="2">Cell membrane</location>
        <topology evidence="2">Multi-pass membrane protein</topology>
    </subcellularLocation>
    <subcellularLocation>
        <location evidence="2">Membrane</location>
        <topology evidence="2">Multi-pass membrane protein</topology>
    </subcellularLocation>
    <subcellularLocation>
        <location evidence="2">Secreted</location>
        <location evidence="2">Extracellular exosome</location>
    </subcellularLocation>
    <text evidence="2">Present at the cell surface of oocytes. Accumulates in the adhesion area between the sperm and egg following interaction between IZUMO1 and its receptor IZUMO1R/JUNO.</text>
</comment>
<comment type="PTM">
    <text evidence="1">Palmitoylated at a low, basal level in unstimulated platelets. The level of palmitoylation increases when platelets are activated by thrombin (in vitro). The protein exists in three forms with molecular masses between 22 and 27 kDa, and is known to carry covalently linked fatty acids. Palmitoylation by ZDHHC2 regulates CD9 expression, association with other tetraspanin family proteins and function in cell adhesion.</text>
</comment>
<comment type="similarity">
    <text evidence="6">Belongs to the tetraspanin (TM4SF) family.</text>
</comment>
<proteinExistence type="evidence at transcript level"/>
<keyword id="KW-0130">Cell adhesion</keyword>
<keyword id="KW-1003">Cell membrane</keyword>
<keyword id="KW-1015">Disulfide bond</keyword>
<keyword id="KW-0278">Fertilization</keyword>
<keyword id="KW-0449">Lipoprotein</keyword>
<keyword id="KW-0472">Membrane</keyword>
<keyword id="KW-0564">Palmitate</keyword>
<keyword id="KW-1185">Reference proteome</keyword>
<keyword id="KW-0964">Secreted</keyword>
<keyword id="KW-0812">Transmembrane</keyword>
<keyword id="KW-1133">Transmembrane helix</keyword>
<sequence length="226" mass="25059">MPVKGGTKCIKYLLFGFNFIFWLAGIAVLAVGLWLRFDSQTKSIFEQDSQPSSFYTGVYILIGAGALMMLVGFLGCCGAVQESQCMLGLFFGFLLVIFAIEIAAAIWGYSHKDEVIQEVQEFYKDTYNKLKSKDEPQRDTLKAIHYALDCCGLAGGVEQFISDICPQKDILSSITVKPCPEAIKEVFHNKFHIIGAVGIGIAVVMIFGMIFSMILCCAIRRSREMV</sequence>
<accession>P40239</accession>
<reference key="1">
    <citation type="journal article" date="1995" name="Mol. Immunol.">
        <title>cDNA cloning and eukaryotic expression of feline CD9.</title>
        <authorList>
            <person name="Willett B.J."/>
            <person name="Neil J.C."/>
        </authorList>
    </citation>
    <scope>NUCLEOTIDE SEQUENCE [MRNA]</scope>
    <scope>SUBCELLULAR LOCATION</scope>
</reference>
<reference key="2">
    <citation type="submission" date="1994-06" db="EMBL/GenBank/DDBJ databases">
        <authorList>
            <person name="Morikawa S."/>
        </authorList>
    </citation>
    <scope>NUCLEOTIDE SEQUENCE [MRNA]</scope>
</reference>
<gene>
    <name evidence="5" type="primary">CD9</name>
</gene>
<feature type="chain" id="PRO_0000219204" description="CD9 antigen">
    <location>
        <begin position="1"/>
        <end position="226"/>
    </location>
</feature>
<feature type="topological domain" description="Cytoplasmic" evidence="3">
    <location>
        <begin position="1"/>
        <end position="12"/>
    </location>
</feature>
<feature type="transmembrane region" description="Helical" evidence="3">
    <location>
        <begin position="13"/>
        <end position="33"/>
    </location>
</feature>
<feature type="topological domain" description="Extracellular" evidence="3">
    <location>
        <begin position="34"/>
        <end position="53"/>
    </location>
</feature>
<feature type="transmembrane region" description="Helical" evidence="3">
    <location>
        <begin position="54"/>
        <end position="74"/>
    </location>
</feature>
<feature type="topological domain" description="Cytoplasmic" evidence="3">
    <location>
        <begin position="75"/>
        <end position="85"/>
    </location>
</feature>
<feature type="transmembrane region" description="Helical" evidence="3">
    <location>
        <begin position="86"/>
        <end position="109"/>
    </location>
</feature>
<feature type="topological domain" description="Extracellular" evidence="3">
    <location>
        <begin position="110"/>
        <end position="193"/>
    </location>
</feature>
<feature type="transmembrane region" description="Helical" evidence="3">
    <location>
        <begin position="194"/>
        <end position="219"/>
    </location>
</feature>
<feature type="topological domain" description="Cytoplasmic" evidence="3">
    <location>
        <begin position="220"/>
        <end position="226"/>
    </location>
</feature>
<feature type="lipid moiety-binding region" description="S-palmitoyl cysteine" evidence="1">
    <location>
        <position position="9"/>
    </location>
</feature>
<feature type="lipid moiety-binding region" description="S-palmitoyl cysteine" evidence="1">
    <location>
        <position position="76"/>
    </location>
</feature>
<feature type="lipid moiety-binding region" description="S-palmitoyl cysteine" evidence="1">
    <location>
        <position position="77"/>
    </location>
</feature>
<feature type="lipid moiety-binding region" description="S-palmitoyl cysteine" evidence="1">
    <location>
        <position position="85"/>
    </location>
</feature>
<feature type="lipid moiety-binding region" description="S-palmitoyl cysteine" evidence="1">
    <location>
        <position position="216"/>
    </location>
</feature>
<feature type="lipid moiety-binding region" description="S-palmitoyl cysteine" evidence="1">
    <location>
        <position position="217"/>
    </location>
</feature>
<feature type="disulfide bond" evidence="4">
    <location>
        <begin position="150"/>
        <end position="179"/>
    </location>
</feature>
<feature type="disulfide bond" evidence="4">
    <location>
        <begin position="151"/>
        <end position="165"/>
    </location>
</feature>
<feature type="sequence conflict" description="In Ref. 2; BAA06452." evidence="6" ref="2">
    <original>S</original>
    <variation>Y</variation>
    <location>
        <position position="83"/>
    </location>
</feature>
<organism>
    <name type="scientific">Felis catus</name>
    <name type="common">Cat</name>
    <name type="synonym">Felis silvestris catus</name>
    <dbReference type="NCBI Taxonomy" id="9685"/>
    <lineage>
        <taxon>Eukaryota</taxon>
        <taxon>Metazoa</taxon>
        <taxon>Chordata</taxon>
        <taxon>Craniata</taxon>
        <taxon>Vertebrata</taxon>
        <taxon>Euteleostomi</taxon>
        <taxon>Mammalia</taxon>
        <taxon>Eutheria</taxon>
        <taxon>Laurasiatheria</taxon>
        <taxon>Carnivora</taxon>
        <taxon>Feliformia</taxon>
        <taxon>Felidae</taxon>
        <taxon>Felinae</taxon>
        <taxon>Felis</taxon>
    </lineage>
</organism>
<protein>
    <recommendedName>
        <fullName evidence="5">CD9 antigen</fullName>
    </recommendedName>
    <cdAntigenName evidence="5">CD9</cdAntigenName>
</protein>
<evidence type="ECO:0000250" key="1">
    <source>
        <dbReference type="UniProtKB" id="P21926"/>
    </source>
</evidence>
<evidence type="ECO:0000250" key="2">
    <source>
        <dbReference type="UniProtKB" id="P40240"/>
    </source>
</evidence>
<evidence type="ECO:0000255" key="3"/>
<evidence type="ECO:0000255" key="4">
    <source>
        <dbReference type="PROSITE-ProRule" id="PRU00114"/>
    </source>
</evidence>
<evidence type="ECO:0000303" key="5">
    <source>
    </source>
</evidence>
<evidence type="ECO:0000305" key="6"/>
<name>CD9_FELCA</name>
<dbReference type="EMBL" id="L35275">
    <property type="protein sequence ID" value="AAA92867.1"/>
    <property type="molecule type" value="mRNA"/>
</dbReference>
<dbReference type="EMBL" id="D30786">
    <property type="protein sequence ID" value="BAA06452.1"/>
    <property type="molecule type" value="mRNA"/>
</dbReference>
<dbReference type="RefSeq" id="NP_001009305.1">
    <property type="nucleotide sequence ID" value="NM_001009305.1"/>
</dbReference>
<dbReference type="SMR" id="P40239"/>
<dbReference type="STRING" id="9685.ENSFCAP00000039363"/>
<dbReference type="PaxDb" id="9685-ENSFCAP00000006372"/>
<dbReference type="Ensembl" id="ENSFCAT00000051425.2">
    <property type="protein sequence ID" value="ENSFCAP00000040359.1"/>
    <property type="gene ID" value="ENSFCAG00000034944.3"/>
</dbReference>
<dbReference type="GeneID" id="493874"/>
<dbReference type="KEGG" id="fca:493874"/>
<dbReference type="CTD" id="928"/>
<dbReference type="VGNC" id="VGNC:83520">
    <property type="gene designation" value="CD9"/>
</dbReference>
<dbReference type="eggNOG" id="KOG3882">
    <property type="taxonomic scope" value="Eukaryota"/>
</dbReference>
<dbReference type="GeneTree" id="ENSGT00940000155083"/>
<dbReference type="HOGENOM" id="CLU_055524_10_1_1"/>
<dbReference type="InParanoid" id="P40239"/>
<dbReference type="OrthoDB" id="5870230at2759"/>
<dbReference type="TreeFam" id="TF352895"/>
<dbReference type="Proteomes" id="UP000011712">
    <property type="component" value="Chromosome B4"/>
</dbReference>
<dbReference type="Bgee" id="ENSFCAG00000034944">
    <property type="expression patterns" value="Expressed in zone of skin and 10 other cell types or tissues"/>
</dbReference>
<dbReference type="GO" id="GO:0005576">
    <property type="term" value="C:extracellular region"/>
    <property type="evidence" value="ECO:0007669"/>
    <property type="project" value="UniProtKB-SubCell"/>
</dbReference>
<dbReference type="GO" id="GO:0016020">
    <property type="term" value="C:membrane"/>
    <property type="evidence" value="ECO:0000250"/>
    <property type="project" value="UniProtKB"/>
</dbReference>
<dbReference type="GO" id="GO:0005886">
    <property type="term" value="C:plasma membrane"/>
    <property type="evidence" value="ECO:0000250"/>
    <property type="project" value="UniProtKB"/>
</dbReference>
<dbReference type="GO" id="GO:0005178">
    <property type="term" value="F:integrin binding"/>
    <property type="evidence" value="ECO:0000250"/>
    <property type="project" value="UniProtKB"/>
</dbReference>
<dbReference type="GO" id="GO:0007155">
    <property type="term" value="P:cell adhesion"/>
    <property type="evidence" value="ECO:0000250"/>
    <property type="project" value="UniProtKB"/>
</dbReference>
<dbReference type="GO" id="GO:0071404">
    <property type="term" value="P:cellular response to low-density lipoprotein particle stimulus"/>
    <property type="evidence" value="ECO:0000250"/>
    <property type="project" value="UniProtKB"/>
</dbReference>
<dbReference type="GO" id="GO:0007342">
    <property type="term" value="P:fusion of sperm to egg plasma membrane involved in single fertilization"/>
    <property type="evidence" value="ECO:0000250"/>
    <property type="project" value="UniProtKB"/>
</dbReference>
<dbReference type="GO" id="GO:0014905">
    <property type="term" value="P:myoblast fusion involved in skeletal muscle regeneration"/>
    <property type="evidence" value="ECO:0000250"/>
    <property type="project" value="UniProtKB"/>
</dbReference>
<dbReference type="GO" id="GO:0090331">
    <property type="term" value="P:negative regulation of platelet aggregation"/>
    <property type="evidence" value="ECO:0000250"/>
    <property type="project" value="UniProtKB"/>
</dbReference>
<dbReference type="GO" id="GO:0030913">
    <property type="term" value="P:paranodal junction assembly"/>
    <property type="evidence" value="ECO:0000250"/>
    <property type="project" value="UniProtKB"/>
</dbReference>
<dbReference type="GO" id="GO:0031623">
    <property type="term" value="P:receptor internalization"/>
    <property type="evidence" value="ECO:0000250"/>
    <property type="project" value="UniProtKB"/>
</dbReference>
<dbReference type="GO" id="GO:0007338">
    <property type="term" value="P:single fertilization"/>
    <property type="evidence" value="ECO:0000250"/>
    <property type="project" value="UniProtKB"/>
</dbReference>
<dbReference type="GO" id="GO:0035036">
    <property type="term" value="P:sperm-egg recognition"/>
    <property type="evidence" value="ECO:0000250"/>
    <property type="project" value="UniProtKB"/>
</dbReference>
<dbReference type="CDD" id="cd03152">
    <property type="entry name" value="CD9_LEL"/>
    <property type="match status" value="1"/>
</dbReference>
<dbReference type="FunFam" id="1.10.1450.10:FF:000016">
    <property type="entry name" value="Tetraspanin"/>
    <property type="match status" value="1"/>
</dbReference>
<dbReference type="Gene3D" id="1.10.1450.10">
    <property type="entry name" value="Tetraspanin"/>
    <property type="match status" value="1"/>
</dbReference>
<dbReference type="InterPro" id="IPR042055">
    <property type="entry name" value="CD9_LEL"/>
</dbReference>
<dbReference type="InterPro" id="IPR018499">
    <property type="entry name" value="Tetraspanin/Peripherin"/>
</dbReference>
<dbReference type="InterPro" id="IPR000301">
    <property type="entry name" value="Tetraspanin_animals"/>
</dbReference>
<dbReference type="InterPro" id="IPR018503">
    <property type="entry name" value="Tetraspanin_CS"/>
</dbReference>
<dbReference type="InterPro" id="IPR008952">
    <property type="entry name" value="Tetraspanin_EC2_sf"/>
</dbReference>
<dbReference type="PANTHER" id="PTHR19282:SF163">
    <property type="entry name" value="CD9 ANTIGEN"/>
    <property type="match status" value="1"/>
</dbReference>
<dbReference type="PANTHER" id="PTHR19282">
    <property type="entry name" value="TETRASPANIN"/>
    <property type="match status" value="1"/>
</dbReference>
<dbReference type="Pfam" id="PF00335">
    <property type="entry name" value="Tetraspanin"/>
    <property type="match status" value="1"/>
</dbReference>
<dbReference type="PIRSF" id="PIRSF002419">
    <property type="entry name" value="Tetraspanin"/>
    <property type="match status" value="1"/>
</dbReference>
<dbReference type="PRINTS" id="PR00259">
    <property type="entry name" value="TMFOUR"/>
</dbReference>
<dbReference type="SUPFAM" id="SSF48652">
    <property type="entry name" value="Tetraspanin"/>
    <property type="match status" value="1"/>
</dbReference>
<dbReference type="PROSITE" id="PS00421">
    <property type="entry name" value="TM4_1"/>
    <property type="match status" value="1"/>
</dbReference>